<organism>
    <name type="scientific">Conus consors</name>
    <name type="common">Singed cone</name>
    <dbReference type="NCBI Taxonomy" id="101297"/>
    <lineage>
        <taxon>Eukaryota</taxon>
        <taxon>Metazoa</taxon>
        <taxon>Spiralia</taxon>
        <taxon>Lophotrochozoa</taxon>
        <taxon>Mollusca</taxon>
        <taxon>Gastropoda</taxon>
        <taxon>Caenogastropoda</taxon>
        <taxon>Neogastropoda</taxon>
        <taxon>Conoidea</taxon>
        <taxon>Conidae</taxon>
        <taxon>Conus</taxon>
        <taxon>Pionoconus</taxon>
    </lineage>
</organism>
<feature type="peptide" id="PRO_0000419885" description="Omega-conotoxin-like CnVIIF" evidence="3">
    <location>
        <begin position="1"/>
        <end position="71"/>
    </location>
</feature>
<feature type="peptide" id="PRO_0000419886" description="Omega-conotoxin-like CnVIID" evidence="3">
    <location>
        <begin position="1"/>
        <end position="70"/>
    </location>
</feature>
<feature type="modified residue" description="Cysteine amide; in CnVIID" evidence="3">
    <location>
        <position position="70"/>
    </location>
</feature>
<feature type="disulfide bond" evidence="2">
    <location>
        <begin position="46"/>
        <end position="61"/>
    </location>
</feature>
<feature type="disulfide bond" evidence="2">
    <location>
        <begin position="53"/>
        <end position="65"/>
    </location>
</feature>
<feature type="disulfide bond" evidence="2">
    <location>
        <begin position="60"/>
        <end position="70"/>
    </location>
</feature>
<keyword id="KW-0027">Amidation</keyword>
<keyword id="KW-1015">Disulfide bond</keyword>
<keyword id="KW-0960">Knottin</keyword>
<keyword id="KW-0528">Neurotoxin</keyword>
<keyword id="KW-0964">Secreted</keyword>
<keyword id="KW-0800">Toxin</keyword>
<sequence>MKLTCVVIVAVLLLTACQLITADDSRGTQRHRALRSDTKLSMSTRCKGKGASCSRTMYNCCSGSCNRGKCG</sequence>
<evidence type="ECO:0000250" key="1"/>
<evidence type="ECO:0000250" key="2">
    <source>
        <dbReference type="UniProtKB" id="P05484"/>
    </source>
</evidence>
<evidence type="ECO:0000269" key="3">
    <source>
    </source>
</evidence>
<evidence type="ECO:0000303" key="4">
    <source>
    </source>
</evidence>
<evidence type="ECO:0000305" key="5"/>
<evidence type="ECO:0000305" key="6">
    <source>
    </source>
</evidence>
<name>M7F_CONCN</name>
<dbReference type="EMBL" id="HE856386">
    <property type="protein sequence ID" value="CCI55499.1"/>
    <property type="molecule type" value="mRNA"/>
</dbReference>
<dbReference type="SMR" id="P0DKQ4"/>
<dbReference type="GO" id="GO:0005576">
    <property type="term" value="C:extracellular region"/>
    <property type="evidence" value="ECO:0007669"/>
    <property type="project" value="UniProtKB-SubCell"/>
</dbReference>
<dbReference type="GO" id="GO:0008200">
    <property type="term" value="F:ion channel inhibitor activity"/>
    <property type="evidence" value="ECO:0007669"/>
    <property type="project" value="InterPro"/>
</dbReference>
<dbReference type="GO" id="GO:0090729">
    <property type="term" value="F:toxin activity"/>
    <property type="evidence" value="ECO:0007669"/>
    <property type="project" value="UniProtKB-KW"/>
</dbReference>
<dbReference type="InterPro" id="IPR004214">
    <property type="entry name" value="Conotoxin"/>
</dbReference>
<dbReference type="InterPro" id="IPR012321">
    <property type="entry name" value="Conotoxin_omega-typ_CS"/>
</dbReference>
<dbReference type="Pfam" id="PF02950">
    <property type="entry name" value="Conotoxin"/>
    <property type="match status" value="1"/>
</dbReference>
<dbReference type="SUPFAM" id="SSF57059">
    <property type="entry name" value="omega toxin-like"/>
    <property type="match status" value="1"/>
</dbReference>
<dbReference type="PROSITE" id="PS60004">
    <property type="entry name" value="OMEGA_CONOTOXIN"/>
    <property type="match status" value="1"/>
</dbReference>
<comment type="function">
    <text evidence="1">Omega-conotoxins act at presynaptic membranes, they bind and block voltage-gated calcium channels (Cav).</text>
</comment>
<comment type="subcellular location">
    <subcellularLocation>
        <location evidence="3">Secreted</location>
    </subcellularLocation>
</comment>
<comment type="tissue specificity">
    <text evidence="5">Expressed by the venom duct.</text>
</comment>
<comment type="domain">
    <text evidence="2">The presence of a 'disulfide through disulfide knot' structurally defines this protein as a knottin.</text>
</comment>
<comment type="domain">
    <text>The cysteine framework is VI/VII (C-C-CC-C-C).</text>
</comment>
<comment type="mass spectrometry">
    <molecule>Omega-conotoxin-like CnVIIF</molecule>
    <text>CnVIIF.</text>
</comment>
<comment type="mass spectrometry">
    <molecule>Omega-conotoxin-like CnVIID</molecule>
    <text>CnVIID.</text>
</comment>
<comment type="miscellaneous">
    <text evidence="6">Found in injectable (milked) (IV) venom.</text>
</comment>
<comment type="similarity">
    <text evidence="5">Belongs to the conotoxin M superfamily.</text>
</comment>
<protein>
    <recommendedName>
        <fullName evidence="4">Omega-conotoxin-like CnVIIF</fullName>
    </recommendedName>
    <component>
        <recommendedName>
            <fullName evidence="4">Omega-conotoxin-like CnVIID</fullName>
        </recommendedName>
    </component>
</protein>
<proteinExistence type="evidence at protein level"/>
<reference key="1">
    <citation type="journal article" date="2012" name="J. Proteomics">
        <title>Large-scale discovery of conopeptides and conoproteins in the injectable venom of a fish-hunting cone snail using a combined proteomic and transcriptomic approach.</title>
        <authorList>
            <person name="Violette A."/>
            <person name="Biass D."/>
            <person name="Dutertre S."/>
            <person name="Koua D."/>
            <person name="Piquemal D."/>
            <person name="Pierrat F."/>
            <person name="Stocklin R."/>
            <person name="Favreau P."/>
        </authorList>
    </citation>
    <scope>NUCLEOTIDE SEQUENCE [MRNA]</scope>
    <scope>AMIDATION AT CYS-70</scope>
    <scope>MASS SPECTROMETRY</scope>
    <scope>IDENTIFICATION BY MASS SPECTROMETRY</scope>
    <scope>SUBCELLULAR LOCATION</scope>
    <source>
        <tissue>Venom</tissue>
        <tissue>Venom duct</tissue>
    </source>
</reference>
<accession>P0DKQ4</accession>
<accession>S6CPX8</accession>